<organism>
    <name type="scientific">Prochlorococcus marinus (strain MIT 9303)</name>
    <dbReference type="NCBI Taxonomy" id="59922"/>
    <lineage>
        <taxon>Bacteria</taxon>
        <taxon>Bacillati</taxon>
        <taxon>Cyanobacteriota</taxon>
        <taxon>Cyanophyceae</taxon>
        <taxon>Synechococcales</taxon>
        <taxon>Prochlorococcaceae</taxon>
        <taxon>Prochlorococcus</taxon>
    </lineage>
</organism>
<dbReference type="EC" id="7.1.1.-" evidence="1"/>
<dbReference type="EMBL" id="CP000554">
    <property type="protein sequence ID" value="ABM79419.1"/>
    <property type="molecule type" value="Genomic_DNA"/>
</dbReference>
<dbReference type="RefSeq" id="WP_011827262.1">
    <property type="nucleotide sequence ID" value="NC_008820.1"/>
</dbReference>
<dbReference type="SMR" id="A2CD59"/>
<dbReference type="STRING" id="59922.P9303_26891"/>
<dbReference type="KEGG" id="pmf:P9303_26891"/>
<dbReference type="HOGENOM" id="CLU_122804_0_0_3"/>
<dbReference type="BioCyc" id="PMAR59922:G1G80-2358-MONOMER"/>
<dbReference type="Proteomes" id="UP000002274">
    <property type="component" value="Chromosome"/>
</dbReference>
<dbReference type="GO" id="GO:0031676">
    <property type="term" value="C:plasma membrane-derived thylakoid membrane"/>
    <property type="evidence" value="ECO:0007669"/>
    <property type="project" value="UniProtKB-SubCell"/>
</dbReference>
<dbReference type="GO" id="GO:0051539">
    <property type="term" value="F:4 iron, 4 sulfur cluster binding"/>
    <property type="evidence" value="ECO:0007669"/>
    <property type="project" value="UniProtKB-KW"/>
</dbReference>
<dbReference type="GO" id="GO:0005506">
    <property type="term" value="F:iron ion binding"/>
    <property type="evidence" value="ECO:0007669"/>
    <property type="project" value="UniProtKB-UniRule"/>
</dbReference>
<dbReference type="GO" id="GO:0008137">
    <property type="term" value="F:NADH dehydrogenase (ubiquinone) activity"/>
    <property type="evidence" value="ECO:0007669"/>
    <property type="project" value="InterPro"/>
</dbReference>
<dbReference type="GO" id="GO:0048038">
    <property type="term" value="F:quinone binding"/>
    <property type="evidence" value="ECO:0007669"/>
    <property type="project" value="UniProtKB-KW"/>
</dbReference>
<dbReference type="GO" id="GO:0019684">
    <property type="term" value="P:photosynthesis, light reaction"/>
    <property type="evidence" value="ECO:0007669"/>
    <property type="project" value="UniProtKB-UniRule"/>
</dbReference>
<dbReference type="Gene3D" id="3.30.70.3270">
    <property type="match status" value="1"/>
</dbReference>
<dbReference type="HAMAP" id="MF_01351">
    <property type="entry name" value="NDH1_NuoI"/>
    <property type="match status" value="1"/>
</dbReference>
<dbReference type="InterPro" id="IPR017896">
    <property type="entry name" value="4Fe4S_Fe-S-bd"/>
</dbReference>
<dbReference type="InterPro" id="IPR017900">
    <property type="entry name" value="4Fe4S_Fe_S_CS"/>
</dbReference>
<dbReference type="InterPro" id="IPR010226">
    <property type="entry name" value="NADH_quinone_OxRdtase_chainI"/>
</dbReference>
<dbReference type="InterPro" id="IPR004497">
    <property type="entry name" value="NDHI"/>
</dbReference>
<dbReference type="NCBIfam" id="TIGR00403">
    <property type="entry name" value="ndhI"/>
    <property type="match status" value="1"/>
</dbReference>
<dbReference type="NCBIfam" id="TIGR01971">
    <property type="entry name" value="NuoI"/>
    <property type="match status" value="1"/>
</dbReference>
<dbReference type="NCBIfam" id="NF004537">
    <property type="entry name" value="PRK05888.1-3"/>
    <property type="match status" value="1"/>
</dbReference>
<dbReference type="PANTHER" id="PTHR47275">
    <property type="entry name" value="NAD(P)H-QUINONE OXIDOREDUCTASE SUBUNIT I, CHLOROPLASTIC"/>
    <property type="match status" value="1"/>
</dbReference>
<dbReference type="PANTHER" id="PTHR47275:SF1">
    <property type="entry name" value="NAD(P)H-QUINONE OXIDOREDUCTASE SUBUNIT I, CHLOROPLASTIC"/>
    <property type="match status" value="1"/>
</dbReference>
<dbReference type="Pfam" id="PF12838">
    <property type="entry name" value="Fer4_7"/>
    <property type="match status" value="1"/>
</dbReference>
<dbReference type="SUPFAM" id="SSF54862">
    <property type="entry name" value="4Fe-4S ferredoxins"/>
    <property type="match status" value="1"/>
</dbReference>
<dbReference type="PROSITE" id="PS00198">
    <property type="entry name" value="4FE4S_FER_1"/>
    <property type="match status" value="2"/>
</dbReference>
<dbReference type="PROSITE" id="PS51379">
    <property type="entry name" value="4FE4S_FER_2"/>
    <property type="match status" value="2"/>
</dbReference>
<keyword id="KW-0004">4Fe-4S</keyword>
<keyword id="KW-0408">Iron</keyword>
<keyword id="KW-0411">Iron-sulfur</keyword>
<keyword id="KW-0472">Membrane</keyword>
<keyword id="KW-0479">Metal-binding</keyword>
<keyword id="KW-0520">NAD</keyword>
<keyword id="KW-0521">NADP</keyword>
<keyword id="KW-0618">Plastoquinone</keyword>
<keyword id="KW-0874">Quinone</keyword>
<keyword id="KW-0677">Repeat</keyword>
<keyword id="KW-0793">Thylakoid</keyword>
<keyword id="KW-1278">Translocase</keyword>
<comment type="function">
    <text evidence="1">NDH-1 shuttles electrons from an unknown electron donor, via FMN and iron-sulfur (Fe-S) centers, to quinones in the respiratory and/or the photosynthetic chain. The immediate electron acceptor for the enzyme in this species is believed to be plastoquinone. Couples the redox reaction to proton translocation, and thus conserves the redox energy in a proton gradient.</text>
</comment>
<comment type="catalytic activity">
    <reaction evidence="1">
        <text>a plastoquinone + NADH + (n+1) H(+)(in) = a plastoquinol + NAD(+) + n H(+)(out)</text>
        <dbReference type="Rhea" id="RHEA:42608"/>
        <dbReference type="Rhea" id="RHEA-COMP:9561"/>
        <dbReference type="Rhea" id="RHEA-COMP:9562"/>
        <dbReference type="ChEBI" id="CHEBI:15378"/>
        <dbReference type="ChEBI" id="CHEBI:17757"/>
        <dbReference type="ChEBI" id="CHEBI:57540"/>
        <dbReference type="ChEBI" id="CHEBI:57945"/>
        <dbReference type="ChEBI" id="CHEBI:62192"/>
    </reaction>
</comment>
<comment type="catalytic activity">
    <reaction evidence="1">
        <text>a plastoquinone + NADPH + (n+1) H(+)(in) = a plastoquinol + NADP(+) + n H(+)(out)</text>
        <dbReference type="Rhea" id="RHEA:42612"/>
        <dbReference type="Rhea" id="RHEA-COMP:9561"/>
        <dbReference type="Rhea" id="RHEA-COMP:9562"/>
        <dbReference type="ChEBI" id="CHEBI:15378"/>
        <dbReference type="ChEBI" id="CHEBI:17757"/>
        <dbReference type="ChEBI" id="CHEBI:57783"/>
        <dbReference type="ChEBI" id="CHEBI:58349"/>
        <dbReference type="ChEBI" id="CHEBI:62192"/>
    </reaction>
</comment>
<comment type="cofactor">
    <cofactor evidence="1">
        <name>[4Fe-4S] cluster</name>
        <dbReference type="ChEBI" id="CHEBI:49883"/>
    </cofactor>
    <text evidence="1">Binds 2 [4Fe-4S] clusters per subunit.</text>
</comment>
<comment type="subunit">
    <text evidence="1">NDH-1 is composed of at least 11 different subunits.</text>
</comment>
<comment type="subcellular location">
    <subcellularLocation>
        <location evidence="1">Cellular thylakoid membrane</location>
        <topology evidence="1">Peripheral membrane protein</topology>
    </subcellularLocation>
</comment>
<comment type="similarity">
    <text evidence="1">Belongs to the complex I 23 kDa subunit family.</text>
</comment>
<accession>A2CD59</accession>
<reference key="1">
    <citation type="journal article" date="2007" name="PLoS Genet.">
        <title>Patterns and implications of gene gain and loss in the evolution of Prochlorococcus.</title>
        <authorList>
            <person name="Kettler G.C."/>
            <person name="Martiny A.C."/>
            <person name="Huang K."/>
            <person name="Zucker J."/>
            <person name="Coleman M.L."/>
            <person name="Rodrigue S."/>
            <person name="Chen F."/>
            <person name="Lapidus A."/>
            <person name="Ferriera S."/>
            <person name="Johnson J."/>
            <person name="Steglich C."/>
            <person name="Church G.M."/>
            <person name="Richardson P."/>
            <person name="Chisholm S.W."/>
        </authorList>
    </citation>
    <scope>NUCLEOTIDE SEQUENCE [LARGE SCALE GENOMIC DNA]</scope>
    <source>
        <strain>MIT 9303</strain>
    </source>
</reference>
<name>NDHI_PROM3</name>
<protein>
    <recommendedName>
        <fullName evidence="1">NAD(P)H-quinone oxidoreductase subunit I</fullName>
        <ecNumber evidence="1">7.1.1.-</ecNumber>
    </recommendedName>
    <alternativeName>
        <fullName evidence="1">NAD(P)H dehydrogenase I subunit I</fullName>
    </alternativeName>
    <alternativeName>
        <fullName evidence="1">NDH-1 subunit I</fullName>
        <shortName evidence="1">NDH-I</shortName>
    </alternativeName>
</protein>
<feature type="chain" id="PRO_0000298533" description="NAD(P)H-quinone oxidoreductase subunit I">
    <location>
        <begin position="1"/>
        <end position="218"/>
    </location>
</feature>
<feature type="domain" description="4Fe-4S ferredoxin-type 1" evidence="1">
    <location>
        <begin position="55"/>
        <end position="84"/>
    </location>
</feature>
<feature type="domain" description="4Fe-4S ferredoxin-type 2" evidence="1">
    <location>
        <begin position="95"/>
        <end position="124"/>
    </location>
</feature>
<feature type="region of interest" description="Disordered" evidence="2">
    <location>
        <begin position="192"/>
        <end position="218"/>
    </location>
</feature>
<feature type="binding site" evidence="1">
    <location>
        <position position="64"/>
    </location>
    <ligand>
        <name>[4Fe-4S] cluster</name>
        <dbReference type="ChEBI" id="CHEBI:49883"/>
        <label>1</label>
    </ligand>
</feature>
<feature type="binding site" evidence="1">
    <location>
        <position position="67"/>
    </location>
    <ligand>
        <name>[4Fe-4S] cluster</name>
        <dbReference type="ChEBI" id="CHEBI:49883"/>
        <label>1</label>
    </ligand>
</feature>
<feature type="binding site" evidence="1">
    <location>
        <position position="70"/>
    </location>
    <ligand>
        <name>[4Fe-4S] cluster</name>
        <dbReference type="ChEBI" id="CHEBI:49883"/>
        <label>1</label>
    </ligand>
</feature>
<feature type="binding site" evidence="1">
    <location>
        <position position="74"/>
    </location>
    <ligand>
        <name>[4Fe-4S] cluster</name>
        <dbReference type="ChEBI" id="CHEBI:49883"/>
        <label>2</label>
    </ligand>
</feature>
<feature type="binding site" evidence="1">
    <location>
        <position position="104"/>
    </location>
    <ligand>
        <name>[4Fe-4S] cluster</name>
        <dbReference type="ChEBI" id="CHEBI:49883"/>
        <label>2</label>
    </ligand>
</feature>
<feature type="binding site" evidence="1">
    <location>
        <position position="107"/>
    </location>
    <ligand>
        <name>[4Fe-4S] cluster</name>
        <dbReference type="ChEBI" id="CHEBI:49883"/>
        <label>2</label>
    </ligand>
</feature>
<feature type="binding site" evidence="1">
    <location>
        <position position="110"/>
    </location>
    <ligand>
        <name>[4Fe-4S] cluster</name>
        <dbReference type="ChEBI" id="CHEBI:49883"/>
        <label>2</label>
    </ligand>
</feature>
<feature type="binding site" evidence="1">
    <location>
        <position position="114"/>
    </location>
    <ligand>
        <name>[4Fe-4S] cluster</name>
        <dbReference type="ChEBI" id="CHEBI:49883"/>
        <label>1</label>
    </ligand>
</feature>
<evidence type="ECO:0000255" key="1">
    <source>
        <dbReference type="HAMAP-Rule" id="MF_01351"/>
    </source>
</evidence>
<evidence type="ECO:0000256" key="2">
    <source>
        <dbReference type="SAM" id="MobiDB-lite"/>
    </source>
</evidence>
<proteinExistence type="inferred from homology"/>
<sequence>MFGFLKKVADYTRDAADAANYLIQGLAVTFDHLRRRPITVQYPYEKLIPSERYRGRIHYEFDKCIACEVCVRVCPINLPVVDWVMNKETKKKELRNYSIDFGVCIFCGNCVEYCPTNCLSMTEEYELAAYDRHSLNYDNVALGRLPTSVTTDPSVQPLRELAYLPKGVMDPHDVPANQPRAGQLPAEVLKSLSLQQDSLQGDEGESLQDAPDQDQPKG</sequence>
<gene>
    <name evidence="1" type="primary">ndhI</name>
    <name type="ordered locus">P9303_26891</name>
</gene>